<feature type="propeptide" id="PRO_0000443644" evidence="4">
    <location>
        <begin position="1"/>
        <end position="10"/>
    </location>
</feature>
<feature type="peptide" id="PRO_0000443645" description="Toxin MSD4" evidence="4">
    <location>
        <begin position="11"/>
        <end position="20"/>
    </location>
</feature>
<feature type="propeptide" id="PRO_0000443646" evidence="4">
    <location>
        <begin position="21"/>
        <end position="34"/>
    </location>
</feature>
<feature type="cross-link" description="Cyclopeptide (Leu-Pro)" evidence="4">
    <location>
        <begin position="11"/>
        <end position="20"/>
    </location>
</feature>
<feature type="non-terminal residue" evidence="3">
    <location>
        <position position="34"/>
    </location>
</feature>
<keyword id="KW-0800">Toxin</keyword>
<evidence type="ECO:0000250" key="1">
    <source>
        <dbReference type="UniProtKB" id="A0A067SLB9"/>
    </source>
</evidence>
<evidence type="ECO:0000303" key="2">
    <source>
    </source>
</evidence>
<evidence type="ECO:0000305" key="3"/>
<evidence type="ECO:0000305" key="4">
    <source>
    </source>
</evidence>
<proteinExistence type="inferred from homology"/>
<reference key="1">
    <citation type="journal article" date="2007" name="Proc. Natl. Acad. Sci. U.S.A.">
        <title>Gene family encoding the major toxins of lethal Amanita mushrooms.</title>
        <authorList>
            <person name="Hallen H.E."/>
            <person name="Luo H."/>
            <person name="Scott-Craig J.S."/>
            <person name="Walton J.D."/>
        </authorList>
    </citation>
    <scope>NUCLEOTIDE SEQUENCE [GENOMIC DNA]</scope>
    <scope>FUNCTION</scope>
</reference>
<protein>
    <recommendedName>
        <fullName evidence="2">MSDIN-like toxin proprotein 4</fullName>
    </recommendedName>
    <component>
        <recommendedName>
            <fullName evidence="2">Toxin MSD4</fullName>
        </recommendedName>
    </component>
</protein>
<gene>
    <name evidence="2" type="primary">MSD4</name>
</gene>
<name>MSD4_AMABI</name>
<accession>A8W7N2</accession>
<comment type="function">
    <text evidence="4">Probable toxin that belongs to the MSDIN-like toxin family responsible for a large number of food poisoning cases and deaths (PubMed:18025465).</text>
</comment>
<comment type="PTM">
    <text evidence="1 4">Processed by the macrocyclase-peptidase enzyme POPB to yield a toxic cyclic decapeptide (PubMed:18025465). POPB first removes 10 residues from the N-terminus (By similarity). Conformational trapping of the remaining peptide forces the enzyme to release this intermediate rather than proceed to macrocyclization (By similarity). The enzyme rebinds the remaining peptide in a different conformation and catalyzes macrocyclization of the N-terminal 10 residues (By similarity).</text>
</comment>
<comment type="similarity">
    <text evidence="3">Belongs to the MSDIN fungal toxin family.</text>
</comment>
<dbReference type="EMBL" id="EU196147">
    <property type="protein sequence ID" value="ABW87776.1"/>
    <property type="molecule type" value="Genomic_DNA"/>
</dbReference>
<dbReference type="GO" id="GO:0090729">
    <property type="term" value="F:toxin activity"/>
    <property type="evidence" value="ECO:0007669"/>
    <property type="project" value="UniProtKB-KW"/>
</dbReference>
<dbReference type="InterPro" id="IPR027582">
    <property type="entry name" value="Amanitin/phalloidin"/>
</dbReference>
<dbReference type="NCBIfam" id="TIGR04309">
    <property type="entry name" value="amanitin"/>
    <property type="match status" value="1"/>
</dbReference>
<organism>
    <name type="scientific">Amanita bisporigera</name>
    <name type="common">Destroying angel</name>
    <dbReference type="NCBI Taxonomy" id="87325"/>
    <lineage>
        <taxon>Eukaryota</taxon>
        <taxon>Fungi</taxon>
        <taxon>Dikarya</taxon>
        <taxon>Basidiomycota</taxon>
        <taxon>Agaricomycotina</taxon>
        <taxon>Agaricomycetes</taxon>
        <taxon>Agaricomycetidae</taxon>
        <taxon>Agaricales</taxon>
        <taxon>Pluteineae</taxon>
        <taxon>Amanitaceae</taxon>
        <taxon>Amanita</taxon>
    </lineage>
</organism>
<sequence>MSDINTARLPLFLPPVRMPPCVGDDIEMVLTRGE</sequence>